<keyword id="KW-0067">ATP-binding</keyword>
<keyword id="KW-0963">Cytoplasm</keyword>
<keyword id="KW-0460">Magnesium</keyword>
<keyword id="KW-0479">Metal-binding</keyword>
<keyword id="KW-0547">Nucleotide-binding</keyword>
<keyword id="KW-0554">One-carbon metabolism</keyword>
<keyword id="KW-0630">Potassium</keyword>
<keyword id="KW-0808">Transferase</keyword>
<gene>
    <name evidence="1" type="primary">metK</name>
    <name type="ordered locus">Tmel_1756</name>
</gene>
<feature type="chain" id="PRO_1000007960" description="S-adenosylmethionine synthase">
    <location>
        <begin position="1"/>
        <end position="395"/>
    </location>
</feature>
<feature type="region of interest" description="Flexible loop" evidence="1">
    <location>
        <begin position="98"/>
        <end position="108"/>
    </location>
</feature>
<feature type="binding site" description="in other chain" evidence="1">
    <location>
        <position position="14"/>
    </location>
    <ligand>
        <name>ATP</name>
        <dbReference type="ChEBI" id="CHEBI:30616"/>
        <note>ligand shared between two neighboring subunits</note>
    </ligand>
</feature>
<feature type="binding site" evidence="1">
    <location>
        <position position="16"/>
    </location>
    <ligand>
        <name>Mg(2+)</name>
        <dbReference type="ChEBI" id="CHEBI:18420"/>
    </ligand>
</feature>
<feature type="binding site" evidence="1">
    <location>
        <position position="42"/>
    </location>
    <ligand>
        <name>K(+)</name>
        <dbReference type="ChEBI" id="CHEBI:29103"/>
    </ligand>
</feature>
<feature type="binding site" description="in other chain" evidence="1">
    <location>
        <position position="55"/>
    </location>
    <ligand>
        <name>L-methionine</name>
        <dbReference type="ChEBI" id="CHEBI:57844"/>
        <note>ligand shared between two neighboring subunits</note>
    </ligand>
</feature>
<feature type="binding site" description="in other chain" evidence="1">
    <location>
        <position position="98"/>
    </location>
    <ligand>
        <name>L-methionine</name>
        <dbReference type="ChEBI" id="CHEBI:57844"/>
        <note>ligand shared between two neighboring subunits</note>
    </ligand>
</feature>
<feature type="binding site" description="in other chain" evidence="1">
    <location>
        <begin position="175"/>
        <end position="177"/>
    </location>
    <ligand>
        <name>ATP</name>
        <dbReference type="ChEBI" id="CHEBI:30616"/>
        <note>ligand shared between two neighboring subunits</note>
    </ligand>
</feature>
<feature type="binding site" description="in other chain" evidence="1">
    <location>
        <begin position="242"/>
        <end position="243"/>
    </location>
    <ligand>
        <name>ATP</name>
        <dbReference type="ChEBI" id="CHEBI:30616"/>
        <note>ligand shared between two neighboring subunits</note>
    </ligand>
</feature>
<feature type="binding site" evidence="1">
    <location>
        <position position="251"/>
    </location>
    <ligand>
        <name>ATP</name>
        <dbReference type="ChEBI" id="CHEBI:30616"/>
        <note>ligand shared between two neighboring subunits</note>
    </ligand>
</feature>
<feature type="binding site" evidence="1">
    <location>
        <position position="251"/>
    </location>
    <ligand>
        <name>L-methionine</name>
        <dbReference type="ChEBI" id="CHEBI:57844"/>
        <note>ligand shared between two neighboring subunits</note>
    </ligand>
</feature>
<feature type="binding site" description="in other chain" evidence="1">
    <location>
        <begin position="257"/>
        <end position="258"/>
    </location>
    <ligand>
        <name>ATP</name>
        <dbReference type="ChEBI" id="CHEBI:30616"/>
        <note>ligand shared between two neighboring subunits</note>
    </ligand>
</feature>
<feature type="binding site" evidence="1">
    <location>
        <position position="274"/>
    </location>
    <ligand>
        <name>ATP</name>
        <dbReference type="ChEBI" id="CHEBI:30616"/>
        <note>ligand shared between two neighboring subunits</note>
    </ligand>
</feature>
<feature type="binding site" evidence="1">
    <location>
        <position position="278"/>
    </location>
    <ligand>
        <name>ATP</name>
        <dbReference type="ChEBI" id="CHEBI:30616"/>
        <note>ligand shared between two neighboring subunits</note>
    </ligand>
</feature>
<feature type="binding site" description="in other chain" evidence="1">
    <location>
        <position position="282"/>
    </location>
    <ligand>
        <name>L-methionine</name>
        <dbReference type="ChEBI" id="CHEBI:57844"/>
        <note>ligand shared between two neighboring subunits</note>
    </ligand>
</feature>
<protein>
    <recommendedName>
        <fullName evidence="1">S-adenosylmethionine synthase</fullName>
        <shortName evidence="1">AdoMet synthase</shortName>
        <ecNumber evidence="1">2.5.1.6</ecNumber>
    </recommendedName>
    <alternativeName>
        <fullName evidence="1">MAT</fullName>
    </alternativeName>
    <alternativeName>
        <fullName evidence="1">Methionine adenosyltransferase</fullName>
    </alternativeName>
</protein>
<sequence length="395" mass="43427">MRRLFTSESVTEGHPDKVADQISDAILDAMLEQDPRSRVAVETLVTTGIAIVSGEVTTRAYVDIQDIVRKTIMEIGYTRAKYGFDGETCAVLSSIHSQSPDIAMGVDKALEAKEGELNAQDDLELVGAGDQGMMFGYATNETKELMPLPIMLAHKLALKLSEIRKSGTVPFLRPDGKTQVTVEYDENDRPVRVDTVLISTQHEPNVTIAEIKEALVKYVIDPIIPEELRDDNLNILVNPTGRFVLGGPSADTGLTGRKIIVDTYGGAIPHGGGAFSGKDPTKVDRSAHYFARYVAKNVVAAGLADKFMIQVAYAIGKAKPVSVMINTYGTAKIDEDKILKAVLELFDFRPGAIIKKLNLLRPIYKKTAAYGHFGRELEEFTWEKLDMVDELKRLL</sequence>
<accession>A6LNU4</accession>
<comment type="function">
    <text evidence="1">Catalyzes the formation of S-adenosylmethionine (AdoMet) from methionine and ATP. The overall synthetic reaction is composed of two sequential steps, AdoMet formation and the subsequent tripolyphosphate hydrolysis which occurs prior to release of AdoMet from the enzyme.</text>
</comment>
<comment type="catalytic activity">
    <reaction evidence="1">
        <text>L-methionine + ATP + H2O = S-adenosyl-L-methionine + phosphate + diphosphate</text>
        <dbReference type="Rhea" id="RHEA:21080"/>
        <dbReference type="ChEBI" id="CHEBI:15377"/>
        <dbReference type="ChEBI" id="CHEBI:30616"/>
        <dbReference type="ChEBI" id="CHEBI:33019"/>
        <dbReference type="ChEBI" id="CHEBI:43474"/>
        <dbReference type="ChEBI" id="CHEBI:57844"/>
        <dbReference type="ChEBI" id="CHEBI:59789"/>
        <dbReference type="EC" id="2.5.1.6"/>
    </reaction>
</comment>
<comment type="cofactor">
    <cofactor evidence="1">
        <name>Mg(2+)</name>
        <dbReference type="ChEBI" id="CHEBI:18420"/>
    </cofactor>
    <text evidence="1">Binds 2 divalent ions per subunit.</text>
</comment>
<comment type="cofactor">
    <cofactor evidence="1">
        <name>K(+)</name>
        <dbReference type="ChEBI" id="CHEBI:29103"/>
    </cofactor>
    <text evidence="1">Binds 1 potassium ion per subunit.</text>
</comment>
<comment type="pathway">
    <text evidence="1">Amino-acid biosynthesis; S-adenosyl-L-methionine biosynthesis; S-adenosyl-L-methionine from L-methionine: step 1/1.</text>
</comment>
<comment type="subunit">
    <text evidence="1">Homotetramer; dimer of dimers.</text>
</comment>
<comment type="subcellular location">
    <subcellularLocation>
        <location evidence="1">Cytoplasm</location>
    </subcellularLocation>
</comment>
<comment type="similarity">
    <text evidence="1">Belongs to the AdoMet synthase family.</text>
</comment>
<reference key="1">
    <citation type="submission" date="2007-05" db="EMBL/GenBank/DDBJ databases">
        <title>Complete sequence of Thermosipho melanesiensis BI429.</title>
        <authorList>
            <consortium name="US DOE Joint Genome Institute"/>
            <person name="Copeland A."/>
            <person name="Lucas S."/>
            <person name="Lapidus A."/>
            <person name="Barry K."/>
            <person name="Glavina del Rio T."/>
            <person name="Dalin E."/>
            <person name="Tice H."/>
            <person name="Pitluck S."/>
            <person name="Chertkov O."/>
            <person name="Brettin T."/>
            <person name="Bruce D."/>
            <person name="Detter J.C."/>
            <person name="Han C."/>
            <person name="Schmutz J."/>
            <person name="Larimer F."/>
            <person name="Land M."/>
            <person name="Hauser L."/>
            <person name="Kyrpides N."/>
            <person name="Mikhailova N."/>
            <person name="Nelson K."/>
            <person name="Gogarten J.P."/>
            <person name="Noll K."/>
            <person name="Richardson P."/>
        </authorList>
    </citation>
    <scope>NUCLEOTIDE SEQUENCE [LARGE SCALE GENOMIC DNA]</scope>
    <source>
        <strain>DSM 12029 / CIP 104789 / BI429</strain>
    </source>
</reference>
<evidence type="ECO:0000255" key="1">
    <source>
        <dbReference type="HAMAP-Rule" id="MF_00086"/>
    </source>
</evidence>
<dbReference type="EC" id="2.5.1.6" evidence="1"/>
<dbReference type="EMBL" id="CP000716">
    <property type="protein sequence ID" value="ABR31595.1"/>
    <property type="molecule type" value="Genomic_DNA"/>
</dbReference>
<dbReference type="RefSeq" id="WP_012057954.1">
    <property type="nucleotide sequence ID" value="NC_009616.1"/>
</dbReference>
<dbReference type="SMR" id="A6LNU4"/>
<dbReference type="STRING" id="391009.Tmel_1756"/>
<dbReference type="KEGG" id="tme:Tmel_1756"/>
<dbReference type="eggNOG" id="COG0192">
    <property type="taxonomic scope" value="Bacteria"/>
</dbReference>
<dbReference type="HOGENOM" id="CLU_041802_1_1_0"/>
<dbReference type="OrthoDB" id="9801686at2"/>
<dbReference type="UniPathway" id="UPA00315">
    <property type="reaction ID" value="UER00080"/>
</dbReference>
<dbReference type="Proteomes" id="UP000001110">
    <property type="component" value="Chromosome"/>
</dbReference>
<dbReference type="GO" id="GO:0005737">
    <property type="term" value="C:cytoplasm"/>
    <property type="evidence" value="ECO:0007669"/>
    <property type="project" value="UniProtKB-SubCell"/>
</dbReference>
<dbReference type="GO" id="GO:0005524">
    <property type="term" value="F:ATP binding"/>
    <property type="evidence" value="ECO:0007669"/>
    <property type="project" value="UniProtKB-UniRule"/>
</dbReference>
<dbReference type="GO" id="GO:0000287">
    <property type="term" value="F:magnesium ion binding"/>
    <property type="evidence" value="ECO:0007669"/>
    <property type="project" value="UniProtKB-UniRule"/>
</dbReference>
<dbReference type="GO" id="GO:0004478">
    <property type="term" value="F:methionine adenosyltransferase activity"/>
    <property type="evidence" value="ECO:0007669"/>
    <property type="project" value="UniProtKB-UniRule"/>
</dbReference>
<dbReference type="GO" id="GO:0006730">
    <property type="term" value="P:one-carbon metabolic process"/>
    <property type="evidence" value="ECO:0007669"/>
    <property type="project" value="UniProtKB-KW"/>
</dbReference>
<dbReference type="GO" id="GO:0006556">
    <property type="term" value="P:S-adenosylmethionine biosynthetic process"/>
    <property type="evidence" value="ECO:0007669"/>
    <property type="project" value="UniProtKB-UniRule"/>
</dbReference>
<dbReference type="CDD" id="cd18079">
    <property type="entry name" value="S-AdoMet_synt"/>
    <property type="match status" value="1"/>
</dbReference>
<dbReference type="FunFam" id="3.30.300.10:FF:000003">
    <property type="entry name" value="S-adenosylmethionine synthase"/>
    <property type="match status" value="1"/>
</dbReference>
<dbReference type="Gene3D" id="3.30.300.10">
    <property type="match status" value="3"/>
</dbReference>
<dbReference type="HAMAP" id="MF_00086">
    <property type="entry name" value="S_AdoMet_synth1"/>
    <property type="match status" value="1"/>
</dbReference>
<dbReference type="InterPro" id="IPR022631">
    <property type="entry name" value="ADOMET_SYNTHASE_CS"/>
</dbReference>
<dbReference type="InterPro" id="IPR022630">
    <property type="entry name" value="S-AdoMet_synt_C"/>
</dbReference>
<dbReference type="InterPro" id="IPR022629">
    <property type="entry name" value="S-AdoMet_synt_central"/>
</dbReference>
<dbReference type="InterPro" id="IPR022628">
    <property type="entry name" value="S-AdoMet_synt_N"/>
</dbReference>
<dbReference type="InterPro" id="IPR002133">
    <property type="entry name" value="S-AdoMet_synthetase"/>
</dbReference>
<dbReference type="InterPro" id="IPR022636">
    <property type="entry name" value="S-AdoMet_synthetase_sfam"/>
</dbReference>
<dbReference type="NCBIfam" id="TIGR01034">
    <property type="entry name" value="metK"/>
    <property type="match status" value="1"/>
</dbReference>
<dbReference type="PANTHER" id="PTHR11964">
    <property type="entry name" value="S-ADENOSYLMETHIONINE SYNTHETASE"/>
    <property type="match status" value="1"/>
</dbReference>
<dbReference type="Pfam" id="PF02773">
    <property type="entry name" value="S-AdoMet_synt_C"/>
    <property type="match status" value="1"/>
</dbReference>
<dbReference type="Pfam" id="PF02772">
    <property type="entry name" value="S-AdoMet_synt_M"/>
    <property type="match status" value="1"/>
</dbReference>
<dbReference type="Pfam" id="PF00438">
    <property type="entry name" value="S-AdoMet_synt_N"/>
    <property type="match status" value="1"/>
</dbReference>
<dbReference type="PIRSF" id="PIRSF000497">
    <property type="entry name" value="MAT"/>
    <property type="match status" value="1"/>
</dbReference>
<dbReference type="SUPFAM" id="SSF55973">
    <property type="entry name" value="S-adenosylmethionine synthetase"/>
    <property type="match status" value="3"/>
</dbReference>
<dbReference type="PROSITE" id="PS00376">
    <property type="entry name" value="ADOMET_SYNTHASE_1"/>
    <property type="match status" value="1"/>
</dbReference>
<dbReference type="PROSITE" id="PS00377">
    <property type="entry name" value="ADOMET_SYNTHASE_2"/>
    <property type="match status" value="1"/>
</dbReference>
<organism>
    <name type="scientific">Thermosipho melanesiensis (strain DSM 12029 / CIP 104789 / BI429)</name>
    <dbReference type="NCBI Taxonomy" id="391009"/>
    <lineage>
        <taxon>Bacteria</taxon>
        <taxon>Thermotogati</taxon>
        <taxon>Thermotogota</taxon>
        <taxon>Thermotogae</taxon>
        <taxon>Thermotogales</taxon>
        <taxon>Fervidobacteriaceae</taxon>
        <taxon>Thermosipho</taxon>
    </lineage>
</organism>
<name>METK_THEM4</name>
<proteinExistence type="inferred from homology"/>